<sequence length="544" mass="62339">MEAWRCVRKGYGHCVVGRGRYPMFPHHSRSLGRDWTTPWENLQRCCWNRHISSCMRWPGHYSRAPYPYFSSRHFSLNWRPPCLFESRTQFQYCNWRPDNLSQTSLIHLSSYVMNAEGDEPSSKRRKHQGVIKRNWEYICSHDKEKTKILGDKNVDPKCEDSENKFDFSVMSYNILSQDLLEDNSHLYRHCRRPVLHWSFRFPNILKEIKHFDADVLCLQEVQEDHYGAEIRPSLESLGYHCEYKMRTGRKPDGCAICFKHSKFSLLSVNPVEFFRPDISLLDRDNVGLVLLLQPKIPYAACPAICVANTHLLYNPRRGDIKLTQLAMLLAEISSVAHQKDGSFCPIVMCGDFNSVPGSPLYSFIKEGKLNYEGLPIGKVSGQEQSSRGQRILSIPIWPPNLGISQNCVYEVQQVPKVEKTDSDLTQTQLKQTEVLVTAEKLSSNLQHHFSLSSVYSHYFPDTGIPEVTTCHSRSAITVDYIFYSAEKEDVAGHPGAEVALVGGLKLLARLSLLTEQDLWTVNGLPNENNSSDHLPLLAKFRLEL</sequence>
<gene>
    <name type="primary">ANGEL2</name>
    <name type="synonym">KIAA0759L</name>
</gene>
<organism>
    <name type="scientific">Homo sapiens</name>
    <name type="common">Human</name>
    <dbReference type="NCBI Taxonomy" id="9606"/>
    <lineage>
        <taxon>Eukaryota</taxon>
        <taxon>Metazoa</taxon>
        <taxon>Chordata</taxon>
        <taxon>Craniata</taxon>
        <taxon>Vertebrata</taxon>
        <taxon>Euteleostomi</taxon>
        <taxon>Mammalia</taxon>
        <taxon>Eutheria</taxon>
        <taxon>Euarchontoglires</taxon>
        <taxon>Primates</taxon>
        <taxon>Haplorrhini</taxon>
        <taxon>Catarrhini</taxon>
        <taxon>Hominidae</taxon>
        <taxon>Homo</taxon>
    </lineage>
</organism>
<proteinExistence type="evidence at protein level"/>
<protein>
    <recommendedName>
        <fullName>Protein angel homolog 2</fullName>
    </recommendedName>
</protein>
<name>ANGE2_HUMAN</name>
<evidence type="ECO:0000303" key="1">
    <source>
    </source>
</evidence>
<evidence type="ECO:0000303" key="2">
    <source ref="1"/>
</evidence>
<evidence type="ECO:0000305" key="3"/>
<evidence type="ECO:0007829" key="4">
    <source>
        <dbReference type="PDB" id="6RVZ"/>
    </source>
</evidence>
<evidence type="ECO:0007829" key="5">
    <source>
        <dbReference type="PDB" id="6RW0"/>
    </source>
</evidence>
<reference key="1">
    <citation type="submission" date="2002-05" db="EMBL/GenBank/DDBJ databases">
        <authorList>
            <person name="Guo J.H."/>
            <person name="Yu L."/>
        </authorList>
    </citation>
    <scope>NUCLEOTIDE SEQUENCE [LARGE SCALE MRNA] (ISOFORM 2)</scope>
    <source>
        <tissue>Brain</tissue>
    </source>
</reference>
<reference key="2">
    <citation type="journal article" date="2004" name="Nat. Genet.">
        <title>Complete sequencing and characterization of 21,243 full-length human cDNAs.</title>
        <authorList>
            <person name="Ota T."/>
            <person name="Suzuki Y."/>
            <person name="Nishikawa T."/>
            <person name="Otsuki T."/>
            <person name="Sugiyama T."/>
            <person name="Irie R."/>
            <person name="Wakamatsu A."/>
            <person name="Hayashi K."/>
            <person name="Sato H."/>
            <person name="Nagai K."/>
            <person name="Kimura K."/>
            <person name="Makita H."/>
            <person name="Sekine M."/>
            <person name="Obayashi M."/>
            <person name="Nishi T."/>
            <person name="Shibahara T."/>
            <person name="Tanaka T."/>
            <person name="Ishii S."/>
            <person name="Yamamoto J."/>
            <person name="Saito K."/>
            <person name="Kawai Y."/>
            <person name="Isono Y."/>
            <person name="Nakamura Y."/>
            <person name="Nagahari K."/>
            <person name="Murakami K."/>
            <person name="Yasuda T."/>
            <person name="Iwayanagi T."/>
            <person name="Wagatsuma M."/>
            <person name="Shiratori A."/>
            <person name="Sudo H."/>
            <person name="Hosoiri T."/>
            <person name="Kaku Y."/>
            <person name="Kodaira H."/>
            <person name="Kondo H."/>
            <person name="Sugawara M."/>
            <person name="Takahashi M."/>
            <person name="Kanda K."/>
            <person name="Yokoi T."/>
            <person name="Furuya T."/>
            <person name="Kikkawa E."/>
            <person name="Omura Y."/>
            <person name="Abe K."/>
            <person name="Kamihara K."/>
            <person name="Katsuta N."/>
            <person name="Sato K."/>
            <person name="Tanikawa M."/>
            <person name="Yamazaki M."/>
            <person name="Ninomiya K."/>
            <person name="Ishibashi T."/>
            <person name="Yamashita H."/>
            <person name="Murakawa K."/>
            <person name="Fujimori K."/>
            <person name="Tanai H."/>
            <person name="Kimata M."/>
            <person name="Watanabe M."/>
            <person name="Hiraoka S."/>
            <person name="Chiba Y."/>
            <person name="Ishida S."/>
            <person name="Ono Y."/>
            <person name="Takiguchi S."/>
            <person name="Watanabe S."/>
            <person name="Yosida M."/>
            <person name="Hotuta T."/>
            <person name="Kusano J."/>
            <person name="Kanehori K."/>
            <person name="Takahashi-Fujii A."/>
            <person name="Hara H."/>
            <person name="Tanase T.-O."/>
            <person name="Nomura Y."/>
            <person name="Togiya S."/>
            <person name="Komai F."/>
            <person name="Hara R."/>
            <person name="Takeuchi K."/>
            <person name="Arita M."/>
            <person name="Imose N."/>
            <person name="Musashino K."/>
            <person name="Yuuki H."/>
            <person name="Oshima A."/>
            <person name="Sasaki N."/>
            <person name="Aotsuka S."/>
            <person name="Yoshikawa Y."/>
            <person name="Matsunawa H."/>
            <person name="Ichihara T."/>
            <person name="Shiohata N."/>
            <person name="Sano S."/>
            <person name="Moriya S."/>
            <person name="Momiyama H."/>
            <person name="Satoh N."/>
            <person name="Takami S."/>
            <person name="Terashima Y."/>
            <person name="Suzuki O."/>
            <person name="Nakagawa S."/>
            <person name="Senoh A."/>
            <person name="Mizoguchi H."/>
            <person name="Goto Y."/>
            <person name="Shimizu F."/>
            <person name="Wakebe H."/>
            <person name="Hishigaki H."/>
            <person name="Watanabe T."/>
            <person name="Sugiyama A."/>
            <person name="Takemoto M."/>
            <person name="Kawakami B."/>
            <person name="Yamazaki M."/>
            <person name="Watanabe K."/>
            <person name="Kumagai A."/>
            <person name="Itakura S."/>
            <person name="Fukuzumi Y."/>
            <person name="Fujimori Y."/>
            <person name="Komiyama M."/>
            <person name="Tashiro H."/>
            <person name="Tanigami A."/>
            <person name="Fujiwara T."/>
            <person name="Ono T."/>
            <person name="Yamada K."/>
            <person name="Fujii Y."/>
            <person name="Ozaki K."/>
            <person name="Hirao M."/>
            <person name="Ohmori Y."/>
            <person name="Kawabata A."/>
            <person name="Hikiji T."/>
            <person name="Kobatake N."/>
            <person name="Inagaki H."/>
            <person name="Ikema Y."/>
            <person name="Okamoto S."/>
            <person name="Okitani R."/>
            <person name="Kawakami T."/>
            <person name="Noguchi S."/>
            <person name="Itoh T."/>
            <person name="Shigeta K."/>
            <person name="Senba T."/>
            <person name="Matsumura K."/>
            <person name="Nakajima Y."/>
            <person name="Mizuno T."/>
            <person name="Morinaga M."/>
            <person name="Sasaki M."/>
            <person name="Togashi T."/>
            <person name="Oyama M."/>
            <person name="Hata H."/>
            <person name="Watanabe M."/>
            <person name="Komatsu T."/>
            <person name="Mizushima-Sugano J."/>
            <person name="Satoh T."/>
            <person name="Shirai Y."/>
            <person name="Takahashi Y."/>
            <person name="Nakagawa K."/>
            <person name="Okumura K."/>
            <person name="Nagase T."/>
            <person name="Nomura N."/>
            <person name="Kikuchi H."/>
            <person name="Masuho Y."/>
            <person name="Yamashita R."/>
            <person name="Nakai K."/>
            <person name="Yada T."/>
            <person name="Nakamura Y."/>
            <person name="Ohara O."/>
            <person name="Isogai T."/>
            <person name="Sugano S."/>
        </authorList>
    </citation>
    <scope>NUCLEOTIDE SEQUENCE [LARGE SCALE MRNA] (ISOFORM 1)</scope>
    <source>
        <tissue>Brain</tissue>
    </source>
</reference>
<reference key="3">
    <citation type="journal article" date="2006" name="Nature">
        <title>The DNA sequence and biological annotation of human chromosome 1.</title>
        <authorList>
            <person name="Gregory S.G."/>
            <person name="Barlow K.F."/>
            <person name="McLay K.E."/>
            <person name="Kaul R."/>
            <person name="Swarbreck D."/>
            <person name="Dunham A."/>
            <person name="Scott C.E."/>
            <person name="Howe K.L."/>
            <person name="Woodfine K."/>
            <person name="Spencer C.C.A."/>
            <person name="Jones M.C."/>
            <person name="Gillson C."/>
            <person name="Searle S."/>
            <person name="Zhou Y."/>
            <person name="Kokocinski F."/>
            <person name="McDonald L."/>
            <person name="Evans R."/>
            <person name="Phillips K."/>
            <person name="Atkinson A."/>
            <person name="Cooper R."/>
            <person name="Jones C."/>
            <person name="Hall R.E."/>
            <person name="Andrews T.D."/>
            <person name="Lloyd C."/>
            <person name="Ainscough R."/>
            <person name="Almeida J.P."/>
            <person name="Ambrose K.D."/>
            <person name="Anderson F."/>
            <person name="Andrew R.W."/>
            <person name="Ashwell R.I.S."/>
            <person name="Aubin K."/>
            <person name="Babbage A.K."/>
            <person name="Bagguley C.L."/>
            <person name="Bailey J."/>
            <person name="Beasley H."/>
            <person name="Bethel G."/>
            <person name="Bird C.P."/>
            <person name="Bray-Allen S."/>
            <person name="Brown J.Y."/>
            <person name="Brown A.J."/>
            <person name="Buckley D."/>
            <person name="Burton J."/>
            <person name="Bye J."/>
            <person name="Carder C."/>
            <person name="Chapman J.C."/>
            <person name="Clark S.Y."/>
            <person name="Clarke G."/>
            <person name="Clee C."/>
            <person name="Cobley V."/>
            <person name="Collier R.E."/>
            <person name="Corby N."/>
            <person name="Coville G.J."/>
            <person name="Davies J."/>
            <person name="Deadman R."/>
            <person name="Dunn M."/>
            <person name="Earthrowl M."/>
            <person name="Ellington A.G."/>
            <person name="Errington H."/>
            <person name="Frankish A."/>
            <person name="Frankland J."/>
            <person name="French L."/>
            <person name="Garner P."/>
            <person name="Garnett J."/>
            <person name="Gay L."/>
            <person name="Ghori M.R.J."/>
            <person name="Gibson R."/>
            <person name="Gilby L.M."/>
            <person name="Gillett W."/>
            <person name="Glithero R.J."/>
            <person name="Grafham D.V."/>
            <person name="Griffiths C."/>
            <person name="Griffiths-Jones S."/>
            <person name="Grocock R."/>
            <person name="Hammond S."/>
            <person name="Harrison E.S.I."/>
            <person name="Hart E."/>
            <person name="Haugen E."/>
            <person name="Heath P.D."/>
            <person name="Holmes S."/>
            <person name="Holt K."/>
            <person name="Howden P.J."/>
            <person name="Hunt A.R."/>
            <person name="Hunt S.E."/>
            <person name="Hunter G."/>
            <person name="Isherwood J."/>
            <person name="James R."/>
            <person name="Johnson C."/>
            <person name="Johnson D."/>
            <person name="Joy A."/>
            <person name="Kay M."/>
            <person name="Kershaw J.K."/>
            <person name="Kibukawa M."/>
            <person name="Kimberley A.M."/>
            <person name="King A."/>
            <person name="Knights A.J."/>
            <person name="Lad H."/>
            <person name="Laird G."/>
            <person name="Lawlor S."/>
            <person name="Leongamornlert D.A."/>
            <person name="Lloyd D.M."/>
            <person name="Loveland J."/>
            <person name="Lovell J."/>
            <person name="Lush M.J."/>
            <person name="Lyne R."/>
            <person name="Martin S."/>
            <person name="Mashreghi-Mohammadi M."/>
            <person name="Matthews L."/>
            <person name="Matthews N.S.W."/>
            <person name="McLaren S."/>
            <person name="Milne S."/>
            <person name="Mistry S."/>
            <person name="Moore M.J.F."/>
            <person name="Nickerson T."/>
            <person name="O'Dell C.N."/>
            <person name="Oliver K."/>
            <person name="Palmeiri A."/>
            <person name="Palmer S.A."/>
            <person name="Parker A."/>
            <person name="Patel D."/>
            <person name="Pearce A.V."/>
            <person name="Peck A.I."/>
            <person name="Pelan S."/>
            <person name="Phelps K."/>
            <person name="Phillimore B.J."/>
            <person name="Plumb R."/>
            <person name="Rajan J."/>
            <person name="Raymond C."/>
            <person name="Rouse G."/>
            <person name="Saenphimmachak C."/>
            <person name="Sehra H.K."/>
            <person name="Sheridan E."/>
            <person name="Shownkeen R."/>
            <person name="Sims S."/>
            <person name="Skuce C.D."/>
            <person name="Smith M."/>
            <person name="Steward C."/>
            <person name="Subramanian S."/>
            <person name="Sycamore N."/>
            <person name="Tracey A."/>
            <person name="Tromans A."/>
            <person name="Van Helmond Z."/>
            <person name="Wall M."/>
            <person name="Wallis J.M."/>
            <person name="White S."/>
            <person name="Whitehead S.L."/>
            <person name="Wilkinson J.E."/>
            <person name="Willey D.L."/>
            <person name="Williams H."/>
            <person name="Wilming L."/>
            <person name="Wray P.W."/>
            <person name="Wu Z."/>
            <person name="Coulson A."/>
            <person name="Vaudin M."/>
            <person name="Sulston J.E."/>
            <person name="Durbin R.M."/>
            <person name="Hubbard T."/>
            <person name="Wooster R."/>
            <person name="Dunham I."/>
            <person name="Carter N.P."/>
            <person name="McVean G."/>
            <person name="Ross M.T."/>
            <person name="Harrow J."/>
            <person name="Olson M.V."/>
            <person name="Beck S."/>
            <person name="Rogers J."/>
            <person name="Bentley D.R."/>
        </authorList>
    </citation>
    <scope>NUCLEOTIDE SEQUENCE [LARGE SCALE GENOMIC DNA]</scope>
</reference>
<reference key="4">
    <citation type="submission" date="2005-09" db="EMBL/GenBank/DDBJ databases">
        <authorList>
            <person name="Mural R.J."/>
            <person name="Istrail S."/>
            <person name="Sutton G.G."/>
            <person name="Florea L."/>
            <person name="Halpern A.L."/>
            <person name="Mobarry C.M."/>
            <person name="Lippert R."/>
            <person name="Walenz B."/>
            <person name="Shatkay H."/>
            <person name="Dew I."/>
            <person name="Miller J.R."/>
            <person name="Flanigan M.J."/>
            <person name="Edwards N.J."/>
            <person name="Bolanos R."/>
            <person name="Fasulo D."/>
            <person name="Halldorsson B.V."/>
            <person name="Hannenhalli S."/>
            <person name="Turner R."/>
            <person name="Yooseph S."/>
            <person name="Lu F."/>
            <person name="Nusskern D.R."/>
            <person name="Shue B.C."/>
            <person name="Zheng X.H."/>
            <person name="Zhong F."/>
            <person name="Delcher A.L."/>
            <person name="Huson D.H."/>
            <person name="Kravitz S.A."/>
            <person name="Mouchard L."/>
            <person name="Reinert K."/>
            <person name="Remington K.A."/>
            <person name="Clark A.G."/>
            <person name="Waterman M.S."/>
            <person name="Eichler E.E."/>
            <person name="Adams M.D."/>
            <person name="Hunkapiller M.W."/>
            <person name="Myers E.W."/>
            <person name="Venter J.C."/>
        </authorList>
    </citation>
    <scope>NUCLEOTIDE SEQUENCE [LARGE SCALE GENOMIC DNA]</scope>
</reference>
<reference key="5">
    <citation type="journal article" date="2004" name="Genome Res.">
        <title>The status, quality, and expansion of the NIH full-length cDNA project: the Mammalian Gene Collection (MGC).</title>
        <authorList>
            <consortium name="The MGC Project Team"/>
        </authorList>
    </citation>
    <scope>NUCLEOTIDE SEQUENCE [LARGE SCALE MRNA] (ISOFORM 2)</scope>
    <source>
        <tissue>Brain</tissue>
    </source>
</reference>
<comment type="alternative products">
    <event type="alternative splicing"/>
    <isoform>
        <id>Q5VTE6-1</id>
        <name>1</name>
        <sequence type="displayed"/>
    </isoform>
    <isoform>
        <id>Q5VTE6-2</id>
        <name>2</name>
        <sequence type="described" ref="VSP_028216"/>
    </isoform>
</comment>
<comment type="similarity">
    <text evidence="3">Belongs to the CCR4/nocturin family.</text>
</comment>
<comment type="sequence caution" evidence="3">
    <conflict type="erroneous termination">
        <sequence resource="EMBL-CDS" id="AAH47469"/>
    </conflict>
    <text>Truncated C-terminus.</text>
</comment>
<dbReference type="EMBL" id="AF510741">
    <property type="protein sequence ID" value="AAM44053.1"/>
    <property type="molecule type" value="mRNA"/>
</dbReference>
<dbReference type="EMBL" id="AK295116">
    <property type="protein sequence ID" value="BAH11980.1"/>
    <property type="molecule type" value="mRNA"/>
</dbReference>
<dbReference type="EMBL" id="AL592449">
    <property type="status" value="NOT_ANNOTATED_CDS"/>
    <property type="molecule type" value="Genomic_DNA"/>
</dbReference>
<dbReference type="EMBL" id="CH471100">
    <property type="protein sequence ID" value="EAW93366.1"/>
    <property type="molecule type" value="Genomic_DNA"/>
</dbReference>
<dbReference type="EMBL" id="CH471100">
    <property type="protein sequence ID" value="EAW93368.1"/>
    <property type="molecule type" value="Genomic_DNA"/>
</dbReference>
<dbReference type="EMBL" id="CH471100">
    <property type="protein sequence ID" value="EAW93369.1"/>
    <property type="molecule type" value="Genomic_DNA"/>
</dbReference>
<dbReference type="EMBL" id="BC047469">
    <property type="protein sequence ID" value="AAH47469.1"/>
    <property type="status" value="ALT_SEQ"/>
    <property type="molecule type" value="mRNA"/>
</dbReference>
<dbReference type="CCDS" id="CCDS1512.1">
    <molecule id="Q5VTE6-1"/>
</dbReference>
<dbReference type="CCDS" id="CCDS73027.1">
    <molecule id="Q5VTE6-2"/>
</dbReference>
<dbReference type="RefSeq" id="NP_001287682.1">
    <property type="nucleotide sequence ID" value="NM_001300753.1"/>
</dbReference>
<dbReference type="RefSeq" id="NP_001287684.1">
    <property type="nucleotide sequence ID" value="NM_001300755.1"/>
</dbReference>
<dbReference type="RefSeq" id="NP_001287686.1">
    <molecule id="Q5VTE6-2"/>
    <property type="nucleotide sequence ID" value="NM_001300757.2"/>
</dbReference>
<dbReference type="RefSeq" id="NP_001287687.1">
    <molecule id="Q5VTE6-2"/>
    <property type="nucleotide sequence ID" value="NM_001300758.2"/>
</dbReference>
<dbReference type="RefSeq" id="NP_653168.2">
    <molecule id="Q5VTE6-1"/>
    <property type="nucleotide sequence ID" value="NM_144567.4"/>
</dbReference>
<dbReference type="PDB" id="6RVZ">
    <property type="method" value="X-ray"/>
    <property type="resolution" value="2.10 A"/>
    <property type="chains" value="A=119-544"/>
</dbReference>
<dbReference type="PDB" id="6RW0">
    <property type="method" value="X-ray"/>
    <property type="resolution" value="1.45 A"/>
    <property type="chains" value="A=119-544"/>
</dbReference>
<dbReference type="PDBsum" id="6RVZ"/>
<dbReference type="PDBsum" id="6RW0"/>
<dbReference type="SMR" id="Q5VTE6"/>
<dbReference type="BioGRID" id="124763">
    <property type="interactions" value="79"/>
</dbReference>
<dbReference type="FunCoup" id="Q5VTE6">
    <property type="interactions" value="3917"/>
</dbReference>
<dbReference type="IntAct" id="Q5VTE6">
    <property type="interactions" value="30"/>
</dbReference>
<dbReference type="STRING" id="9606.ENSP00000355929"/>
<dbReference type="GlyGen" id="Q5VTE6">
    <property type="glycosylation" value="1 site, 1 O-linked glycan (1 site)"/>
</dbReference>
<dbReference type="iPTMnet" id="Q5VTE6"/>
<dbReference type="PhosphoSitePlus" id="Q5VTE6"/>
<dbReference type="BioMuta" id="ANGEL2"/>
<dbReference type="DMDM" id="74746929"/>
<dbReference type="jPOST" id="Q5VTE6"/>
<dbReference type="MassIVE" id="Q5VTE6"/>
<dbReference type="PaxDb" id="9606-ENSP00000355929"/>
<dbReference type="PeptideAtlas" id="Q5VTE6"/>
<dbReference type="ProteomicsDB" id="65323">
    <molecule id="Q5VTE6-1"/>
</dbReference>
<dbReference type="ProteomicsDB" id="65324">
    <molecule id="Q5VTE6-2"/>
</dbReference>
<dbReference type="Pumba" id="Q5VTE6"/>
<dbReference type="Antibodypedia" id="34614">
    <property type="antibodies" value="99 antibodies from 23 providers"/>
</dbReference>
<dbReference type="DNASU" id="90806"/>
<dbReference type="Ensembl" id="ENST00000360506.6">
    <molecule id="Q5VTE6-2"/>
    <property type="protein sequence ID" value="ENSP00000353696.2"/>
    <property type="gene ID" value="ENSG00000174606.14"/>
</dbReference>
<dbReference type="Ensembl" id="ENST00000366962.8">
    <molecule id="Q5VTE6-1"/>
    <property type="protein sequence ID" value="ENSP00000355929.3"/>
    <property type="gene ID" value="ENSG00000174606.14"/>
</dbReference>
<dbReference type="Ensembl" id="ENST00000535388.2">
    <molecule id="Q5VTE6-2"/>
    <property type="protein sequence ID" value="ENSP00000438141.2"/>
    <property type="gene ID" value="ENSG00000174606.14"/>
</dbReference>
<dbReference type="GeneID" id="90806"/>
<dbReference type="KEGG" id="hsa:90806"/>
<dbReference type="MANE-Select" id="ENST00000366962.8">
    <property type="protein sequence ID" value="ENSP00000355929.3"/>
    <property type="RefSeq nucleotide sequence ID" value="NM_144567.5"/>
    <property type="RefSeq protein sequence ID" value="NP_653168.2"/>
</dbReference>
<dbReference type="UCSC" id="uc001hjz.3">
    <molecule id="Q5VTE6-1"/>
    <property type="organism name" value="human"/>
</dbReference>
<dbReference type="AGR" id="HGNC:30534"/>
<dbReference type="CTD" id="90806"/>
<dbReference type="DisGeNET" id="90806"/>
<dbReference type="GeneCards" id="ANGEL2"/>
<dbReference type="HGNC" id="HGNC:30534">
    <property type="gene designation" value="ANGEL2"/>
</dbReference>
<dbReference type="HPA" id="ENSG00000174606">
    <property type="expression patterns" value="Low tissue specificity"/>
</dbReference>
<dbReference type="MIM" id="619001">
    <property type="type" value="gene"/>
</dbReference>
<dbReference type="neXtProt" id="NX_Q5VTE6"/>
<dbReference type="OpenTargets" id="ENSG00000174606"/>
<dbReference type="PharmGKB" id="PA142672620"/>
<dbReference type="VEuPathDB" id="HostDB:ENSG00000174606"/>
<dbReference type="eggNOG" id="KOG0620">
    <property type="taxonomic scope" value="Eukaryota"/>
</dbReference>
<dbReference type="eggNOG" id="KOG2338">
    <property type="taxonomic scope" value="Eukaryota"/>
</dbReference>
<dbReference type="GeneTree" id="ENSGT00940000157391"/>
<dbReference type="HOGENOM" id="CLU_016428_0_2_1"/>
<dbReference type="InParanoid" id="Q5VTE6"/>
<dbReference type="OMA" id="WRPPQFC"/>
<dbReference type="OrthoDB" id="10253982at2759"/>
<dbReference type="PAN-GO" id="Q5VTE6">
    <property type="GO annotations" value="3 GO annotations based on evolutionary models"/>
</dbReference>
<dbReference type="PhylomeDB" id="Q5VTE6"/>
<dbReference type="TreeFam" id="TF316126"/>
<dbReference type="PathwayCommons" id="Q5VTE6"/>
<dbReference type="SignaLink" id="Q5VTE6"/>
<dbReference type="BioGRID-ORCS" id="90806">
    <property type="hits" value="12 hits in 1153 CRISPR screens"/>
</dbReference>
<dbReference type="ChiTaRS" id="ANGEL2">
    <property type="organism name" value="human"/>
</dbReference>
<dbReference type="GenomeRNAi" id="90806"/>
<dbReference type="Pharos" id="Q5VTE6">
    <property type="development level" value="Tbio"/>
</dbReference>
<dbReference type="PRO" id="PR:Q5VTE6"/>
<dbReference type="Proteomes" id="UP000005640">
    <property type="component" value="Chromosome 1"/>
</dbReference>
<dbReference type="RNAct" id="Q5VTE6">
    <property type="molecule type" value="protein"/>
</dbReference>
<dbReference type="Bgee" id="ENSG00000174606">
    <property type="expression patterns" value="Expressed in calcaneal tendon and 199 other cell types or tissues"/>
</dbReference>
<dbReference type="GO" id="GO:0015030">
    <property type="term" value="C:Cajal body"/>
    <property type="evidence" value="ECO:0000314"/>
    <property type="project" value="HGNC"/>
</dbReference>
<dbReference type="GO" id="GO:0005737">
    <property type="term" value="C:cytoplasm"/>
    <property type="evidence" value="ECO:0000314"/>
    <property type="project" value="HGNC"/>
</dbReference>
<dbReference type="GO" id="GO:0005759">
    <property type="term" value="C:mitochondrial matrix"/>
    <property type="evidence" value="ECO:0000314"/>
    <property type="project" value="FlyBase"/>
</dbReference>
<dbReference type="GO" id="GO:0005739">
    <property type="term" value="C:mitochondrion"/>
    <property type="evidence" value="ECO:0006056"/>
    <property type="project" value="FlyBase"/>
</dbReference>
<dbReference type="GO" id="GO:0003824">
    <property type="term" value="F:catalytic activity"/>
    <property type="evidence" value="ECO:0007669"/>
    <property type="project" value="InterPro"/>
</dbReference>
<dbReference type="GO" id="GO:0003730">
    <property type="term" value="F:mRNA 3'-UTR binding"/>
    <property type="evidence" value="ECO:0000314"/>
    <property type="project" value="HGNC"/>
</dbReference>
<dbReference type="GO" id="GO:0070935">
    <property type="term" value="P:3'-UTR-mediated mRNA stabilization"/>
    <property type="evidence" value="ECO:0000315"/>
    <property type="project" value="HGNC"/>
</dbReference>
<dbReference type="GO" id="GO:0090616">
    <property type="term" value="P:mitochondrial mRNA 3'-end processing"/>
    <property type="evidence" value="ECO:0007669"/>
    <property type="project" value="Ensembl"/>
</dbReference>
<dbReference type="GO" id="GO:0045930">
    <property type="term" value="P:negative regulation of mitotic cell cycle"/>
    <property type="evidence" value="ECO:0000315"/>
    <property type="project" value="HGNC"/>
</dbReference>
<dbReference type="Gene3D" id="3.60.10.10">
    <property type="entry name" value="Endonuclease/exonuclease/phosphatase"/>
    <property type="match status" value="1"/>
</dbReference>
<dbReference type="InterPro" id="IPR045816">
    <property type="entry name" value="ANGEL2_N"/>
</dbReference>
<dbReference type="InterPro" id="IPR050410">
    <property type="entry name" value="CCR4/nocturin_mRNA_transcr"/>
</dbReference>
<dbReference type="InterPro" id="IPR036691">
    <property type="entry name" value="Endo/exonu/phosph_ase_sf"/>
</dbReference>
<dbReference type="InterPro" id="IPR005135">
    <property type="entry name" value="Endo/exonuclease/phosphatase"/>
</dbReference>
<dbReference type="PANTHER" id="PTHR12121">
    <property type="entry name" value="CARBON CATABOLITE REPRESSOR PROTEIN 4"/>
    <property type="match status" value="1"/>
</dbReference>
<dbReference type="PANTHER" id="PTHR12121:SF27">
    <property type="entry name" value="PROTEIN ANGEL HOMOLOG 2"/>
    <property type="match status" value="1"/>
</dbReference>
<dbReference type="Pfam" id="PF19339">
    <property type="entry name" value="ANGEL2_N"/>
    <property type="match status" value="2"/>
</dbReference>
<dbReference type="Pfam" id="PF03372">
    <property type="entry name" value="Exo_endo_phos"/>
    <property type="match status" value="1"/>
</dbReference>
<dbReference type="SUPFAM" id="SSF56219">
    <property type="entry name" value="DNase I-like"/>
    <property type="match status" value="1"/>
</dbReference>
<accession>Q5VTE6</accession>
<accession>B7Z2U4</accession>
<accession>D3DTA3</accession>
<accession>Q86X13</accession>
<accession>Q8NHH3</accession>
<feature type="chain" id="PRO_0000305080" description="Protein angel homolog 2">
    <location>
        <begin position="1"/>
        <end position="544"/>
    </location>
</feature>
<feature type="splice variant" id="VSP_028216" description="In isoform 2." evidence="1 2">
    <location>
        <begin position="1"/>
        <end position="169"/>
    </location>
</feature>
<feature type="sequence variant" id="VAR_050290" description="In dbSNP:rs11542154.">
    <original>P</original>
    <variation>S</variation>
    <location>
        <position position="97"/>
    </location>
</feature>
<feature type="strand" evidence="5">
    <location>
        <begin position="135"/>
        <end position="137"/>
    </location>
</feature>
<feature type="strand" evidence="5">
    <location>
        <begin position="164"/>
        <end position="173"/>
    </location>
</feature>
<feature type="helix" evidence="5">
    <location>
        <begin position="177"/>
        <end position="182"/>
    </location>
</feature>
<feature type="helix" evidence="5">
    <location>
        <begin position="183"/>
        <end position="187"/>
    </location>
</feature>
<feature type="helix" evidence="5">
    <location>
        <begin position="192"/>
        <end position="195"/>
    </location>
</feature>
<feature type="helix" evidence="5">
    <location>
        <begin position="197"/>
        <end position="211"/>
    </location>
</feature>
<feature type="strand" evidence="5">
    <location>
        <begin position="214"/>
        <end position="222"/>
    </location>
</feature>
<feature type="helix" evidence="5">
    <location>
        <begin position="223"/>
        <end position="228"/>
    </location>
</feature>
<feature type="helix" evidence="5">
    <location>
        <begin position="230"/>
        <end position="236"/>
    </location>
</feature>
<feature type="strand" evidence="5">
    <location>
        <begin position="239"/>
        <end position="245"/>
    </location>
</feature>
<feature type="strand" evidence="4">
    <location>
        <begin position="247"/>
        <end position="249"/>
    </location>
</feature>
<feature type="strand" evidence="5">
    <location>
        <begin position="252"/>
        <end position="259"/>
    </location>
</feature>
<feature type="turn" evidence="5">
    <location>
        <begin position="260"/>
        <end position="262"/>
    </location>
</feature>
<feature type="strand" evidence="5">
    <location>
        <begin position="263"/>
        <end position="272"/>
    </location>
</feature>
<feature type="strand" evidence="5">
    <location>
        <begin position="286"/>
        <end position="294"/>
    </location>
</feature>
<feature type="strand" evidence="5">
    <location>
        <begin position="304"/>
        <end position="310"/>
    </location>
</feature>
<feature type="helix" evidence="5">
    <location>
        <begin position="318"/>
        <end position="335"/>
    </location>
</feature>
<feature type="strand" evidence="5">
    <location>
        <begin position="341"/>
        <end position="343"/>
    </location>
</feature>
<feature type="strand" evidence="5">
    <location>
        <begin position="346"/>
        <end position="351"/>
    </location>
</feature>
<feature type="helix" evidence="5">
    <location>
        <begin position="359"/>
        <end position="366"/>
    </location>
</feature>
<feature type="strand" evidence="5">
    <location>
        <begin position="367"/>
        <end position="370"/>
    </location>
</feature>
<feature type="helix" evidence="5">
    <location>
        <begin position="376"/>
        <end position="378"/>
    </location>
</feature>
<feature type="strand" evidence="5">
    <location>
        <begin position="394"/>
        <end position="397"/>
    </location>
</feature>
<feature type="helix" evidence="5">
    <location>
        <begin position="399"/>
        <end position="401"/>
    </location>
</feature>
<feature type="strand" evidence="4">
    <location>
        <begin position="407"/>
        <end position="409"/>
    </location>
</feature>
<feature type="strand" evidence="5">
    <location>
        <begin position="444"/>
        <end position="446"/>
    </location>
</feature>
<feature type="strand" evidence="5">
    <location>
        <begin position="451"/>
        <end position="454"/>
    </location>
</feature>
<feature type="turn" evidence="5">
    <location>
        <begin position="460"/>
        <end position="462"/>
    </location>
</feature>
<feature type="strand" evidence="5">
    <location>
        <begin position="467"/>
        <end position="471"/>
    </location>
</feature>
<feature type="strand" evidence="5">
    <location>
        <begin position="474"/>
        <end position="476"/>
    </location>
</feature>
<feature type="strand" evidence="5">
    <location>
        <begin position="479"/>
        <end position="484"/>
    </location>
</feature>
<feature type="strand" evidence="5">
    <location>
        <begin position="505"/>
        <end position="510"/>
    </location>
</feature>
<feature type="helix" evidence="5">
    <location>
        <begin position="515"/>
        <end position="520"/>
    </location>
</feature>
<feature type="strand" evidence="5">
    <location>
        <begin position="523"/>
        <end position="525"/>
    </location>
</feature>
<feature type="strand" evidence="5">
    <location>
        <begin position="531"/>
        <end position="533"/>
    </location>
</feature>
<feature type="strand" evidence="5">
    <location>
        <begin position="536"/>
        <end position="543"/>
    </location>
</feature>
<keyword id="KW-0002">3D-structure</keyword>
<keyword id="KW-0025">Alternative splicing</keyword>
<keyword id="KW-1267">Proteomics identification</keyword>
<keyword id="KW-1185">Reference proteome</keyword>